<organism>
    <name type="scientific">Arthroderma otae</name>
    <name type="common">Microsporum canis</name>
    <dbReference type="NCBI Taxonomy" id="63405"/>
    <lineage>
        <taxon>Eukaryota</taxon>
        <taxon>Fungi</taxon>
        <taxon>Dikarya</taxon>
        <taxon>Ascomycota</taxon>
        <taxon>Pezizomycotina</taxon>
        <taxon>Eurotiomycetes</taxon>
        <taxon>Eurotiomycetidae</taxon>
        <taxon>Onygenales</taxon>
        <taxon>Arthrodermataceae</taxon>
        <taxon>Microsporum</taxon>
    </lineage>
</organism>
<feature type="signal peptide" evidence="2">
    <location>
        <begin position="1"/>
        <end position="18"/>
    </location>
</feature>
<feature type="propeptide" id="PRO_5000068598" evidence="1">
    <location>
        <begin position="19"/>
        <end position="246"/>
    </location>
</feature>
<feature type="chain" id="PRO_5000068599" description="Extracellular metalloproteinase 3">
    <location>
        <begin position="247"/>
        <end position="633"/>
    </location>
</feature>
<feature type="active site" evidence="3">
    <location>
        <position position="430"/>
    </location>
</feature>
<feature type="binding site" evidence="3">
    <location>
        <position position="429"/>
    </location>
    <ligand>
        <name>Zn(2+)</name>
        <dbReference type="ChEBI" id="CHEBI:29105"/>
        <note>catalytic</note>
    </ligand>
</feature>
<feature type="binding site" evidence="3">
    <location>
        <position position="433"/>
    </location>
    <ligand>
        <name>Zn(2+)</name>
        <dbReference type="ChEBI" id="CHEBI:29105"/>
        <note>catalytic</note>
    </ligand>
</feature>
<feature type="glycosylation site" description="N-linked (GlcNAc...) asparagine" evidence="2">
    <location>
        <position position="410"/>
    </location>
</feature>
<feature type="glycosylation site" description="N-linked (GlcNAc...) asparagine" evidence="2">
    <location>
        <position position="480"/>
    </location>
</feature>
<dbReference type="EC" id="3.4.24.-"/>
<dbReference type="EMBL" id="AJ490183">
    <property type="protein sequence ID" value="CAD35288.1"/>
    <property type="molecule type" value="Genomic_DNA"/>
</dbReference>
<dbReference type="EMBL" id="AB097684">
    <property type="protein sequence ID" value="BAF97795.1"/>
    <property type="molecule type" value="Genomic_DNA"/>
</dbReference>
<dbReference type="EMBL" id="AB125268">
    <property type="protein sequence ID" value="BAF97796.1"/>
    <property type="molecule type" value="Genomic_DNA"/>
</dbReference>
<dbReference type="SMR" id="Q8J0D6"/>
<dbReference type="MEROPS" id="M36.001"/>
<dbReference type="GlyCosmos" id="Q8J0D6">
    <property type="glycosylation" value="2 sites, No reported glycans"/>
</dbReference>
<dbReference type="GO" id="GO:0005576">
    <property type="term" value="C:extracellular region"/>
    <property type="evidence" value="ECO:0007669"/>
    <property type="project" value="UniProtKB-SubCell"/>
</dbReference>
<dbReference type="GO" id="GO:0004222">
    <property type="term" value="F:metalloendopeptidase activity"/>
    <property type="evidence" value="ECO:0007669"/>
    <property type="project" value="InterPro"/>
</dbReference>
<dbReference type="GO" id="GO:0008270">
    <property type="term" value="F:zinc ion binding"/>
    <property type="evidence" value="ECO:0007669"/>
    <property type="project" value="InterPro"/>
</dbReference>
<dbReference type="GO" id="GO:0006508">
    <property type="term" value="P:proteolysis"/>
    <property type="evidence" value="ECO:0007669"/>
    <property type="project" value="UniProtKB-KW"/>
</dbReference>
<dbReference type="CDD" id="cd09596">
    <property type="entry name" value="M36"/>
    <property type="match status" value="1"/>
</dbReference>
<dbReference type="Gene3D" id="3.10.170.10">
    <property type="match status" value="1"/>
</dbReference>
<dbReference type="Gene3D" id="1.10.390.10">
    <property type="entry name" value="Neutral Protease Domain 2"/>
    <property type="match status" value="1"/>
</dbReference>
<dbReference type="InterPro" id="IPR011096">
    <property type="entry name" value="FTP_domain"/>
</dbReference>
<dbReference type="InterPro" id="IPR050371">
    <property type="entry name" value="Fungal_virulence_M36"/>
</dbReference>
<dbReference type="InterPro" id="IPR001842">
    <property type="entry name" value="Peptidase_M36"/>
</dbReference>
<dbReference type="InterPro" id="IPR027268">
    <property type="entry name" value="Peptidase_M4/M1_CTD_sf"/>
</dbReference>
<dbReference type="PANTHER" id="PTHR33478">
    <property type="entry name" value="EXTRACELLULAR METALLOPROTEINASE MEP"/>
    <property type="match status" value="1"/>
</dbReference>
<dbReference type="PANTHER" id="PTHR33478:SF1">
    <property type="entry name" value="EXTRACELLULAR METALLOPROTEINASE MEP"/>
    <property type="match status" value="1"/>
</dbReference>
<dbReference type="Pfam" id="PF07504">
    <property type="entry name" value="FTP"/>
    <property type="match status" value="1"/>
</dbReference>
<dbReference type="Pfam" id="PF02128">
    <property type="entry name" value="Peptidase_M36"/>
    <property type="match status" value="1"/>
</dbReference>
<dbReference type="PRINTS" id="PR00999">
    <property type="entry name" value="FUNGALYSIN"/>
</dbReference>
<dbReference type="SUPFAM" id="SSF55486">
    <property type="entry name" value="Metalloproteases ('zincins'), catalytic domain"/>
    <property type="match status" value="1"/>
</dbReference>
<dbReference type="PROSITE" id="PS00142">
    <property type="entry name" value="ZINC_PROTEASE"/>
    <property type="match status" value="1"/>
</dbReference>
<name>MEP3_ARTOT</name>
<sequence length="633" mass="69377">MHGLLLAGLLALPMNVLAHPAEQQTSSVLSRRGVDIDSFRLPLKAKYMDSDATAQKIQALSFSKEDDYVSTATKLVKSTFPKSTFRVVDDHYIGTNGIGHVHFKQTAHGLDIDNSDFNVNIDRDGKVFSFGNSFFTGEIPKESPMVKREFSDPVKALKGAVKALNLPVKSENAKAKTVEGKESFEFQGTSGALSAPKAKLVYLQKEDGSLALTWKVETDVGDNWLLSYVDAHDSETVHNVVDYVASAEFKVFAWGLNDPTEGNPTSFRDPWTASSPFTWHSDGTNKYPTTRGNNAIAQDNPTGGSTYLNNYRPQSANLIFNYPWTAAMTPPSSYKDFSITQLFYTTNRYHDLLYSFGFNEAAGNFQVNNNNKGGKGNDFAIVNAQDGSGTNNANFATPPDGSPGRMRMYNWTTARPNRDGCLEAGIVIHEYTHGLSNRLCGGPANSACLNALESGGMGEGWGDFYATAIRLKPRDTKNTNYSMGAWAANDPKGIRAYLYSTNLQTNPYMYTSVNNLREVHGIGTVWATMLYELMWGLIEAHGGTYSADPVFRNGVPQDGRHLAMKIVMDGMALQPCNPNFVQARDAIIDADRALTNGANKCTIWKAFAKRGLGYGAKYDPRTRTGSNQLPPGC</sequence>
<reference key="1">
    <citation type="journal article" date="2002" name="Infect. Immun.">
        <title>Secreted metalloprotease gene family of Microsporum canis.</title>
        <authorList>
            <person name="Brouta F."/>
            <person name="Descamps F."/>
            <person name="Monod M."/>
            <person name="Vermout S."/>
            <person name="Losson B."/>
            <person name="Mignon B."/>
        </authorList>
    </citation>
    <scope>NUCLEOTIDE SEQUENCE [GENOMIC DNA]</scope>
    <source>
        <strain>IHEM 15221</strain>
    </source>
</reference>
<reference key="2">
    <citation type="journal article" date="2004" name="Microbiology">
        <title>Multiplication of an ancestral gene encoding secreted fungalysin preceded species differentiation in the dermatophytes Trichophyton and Microsporum.</title>
        <authorList>
            <person name="Jousson O."/>
            <person name="Lechenne B."/>
            <person name="Bontems O."/>
            <person name="Capoccia S."/>
            <person name="Mignon B."/>
            <person name="Barblan J."/>
            <person name="Quadroni M."/>
            <person name="Monod M."/>
        </authorList>
    </citation>
    <scope>NUCLEOTIDE SEQUENCE [GENOMIC DNA]</scope>
    <scope>IDENTIFICATION BY MASS SPECTROMETRY</scope>
    <scope>SUBCELLULAR LOCATION</scope>
    <source>
        <strain>LAU709-03</strain>
    </source>
</reference>
<reference key="3">
    <citation type="journal article" date="2004" name="Jpn. J. Infect. Dis.">
        <title>Isolation of a promoter region of a secreted metalloprotease gene from Microsporum canis.</title>
        <authorList>
            <person name="Yamada T."/>
            <person name="Makimura K."/>
            <person name="Hirai A."/>
            <person name="Kano R."/>
            <person name="Hasegawa A."/>
            <person name="Uchida K."/>
            <person name="Yamaguchi H."/>
        </authorList>
    </citation>
    <scope>NUCLEOTIDE SEQUENCE [GENOMIC DNA]</scope>
    <source>
        <strain>TIMM4092</strain>
    </source>
</reference>
<gene>
    <name type="primary">MEP3</name>
</gene>
<accession>Q8J0D6</accession>
<comment type="function">
    <text evidence="1">Secreted metalloproteinase probably acting as a virulence factor.</text>
</comment>
<comment type="cofactor">
    <cofactor evidence="1">
        <name>Zn(2+)</name>
        <dbReference type="ChEBI" id="CHEBI:29105"/>
    </cofactor>
    <text evidence="1">Binds 1 zinc ion per subunit.</text>
</comment>
<comment type="subcellular location">
    <subcellularLocation>
        <location evidence="4">Secreted</location>
    </subcellularLocation>
</comment>
<comment type="similarity">
    <text evidence="5">Belongs to the peptidase M36 family.</text>
</comment>
<keyword id="KW-0325">Glycoprotein</keyword>
<keyword id="KW-0378">Hydrolase</keyword>
<keyword id="KW-0479">Metal-binding</keyword>
<keyword id="KW-0482">Metalloprotease</keyword>
<keyword id="KW-0645">Protease</keyword>
<keyword id="KW-0964">Secreted</keyword>
<keyword id="KW-0732">Signal</keyword>
<keyword id="KW-0843">Virulence</keyword>
<keyword id="KW-0862">Zinc</keyword>
<keyword id="KW-0865">Zymogen</keyword>
<protein>
    <recommendedName>
        <fullName>Extracellular metalloproteinase 3</fullName>
        <ecNumber>3.4.24.-</ecNumber>
    </recommendedName>
    <alternativeName>
        <fullName>Fungalysin MEP3</fullName>
    </alternativeName>
</protein>
<proteinExistence type="evidence at protein level"/>
<evidence type="ECO:0000250" key="1"/>
<evidence type="ECO:0000255" key="2"/>
<evidence type="ECO:0000255" key="3">
    <source>
        <dbReference type="PROSITE-ProRule" id="PRU10095"/>
    </source>
</evidence>
<evidence type="ECO:0000269" key="4">
    <source>
    </source>
</evidence>
<evidence type="ECO:0000305" key="5"/>